<gene>
    <name type="primary">PTP1</name>
    <name type="ordered locus">YDL230W</name>
</gene>
<name>PTP1_YEAST</name>
<evidence type="ECO:0000255" key="1">
    <source>
        <dbReference type="PROSITE-ProRule" id="PRU00160"/>
    </source>
</evidence>
<evidence type="ECO:0000255" key="2">
    <source>
        <dbReference type="PROSITE-ProRule" id="PRU10044"/>
    </source>
</evidence>
<evidence type="ECO:0000269" key="3">
    <source>
    </source>
</evidence>
<evidence type="ECO:0000269" key="4">
    <source>
    </source>
</evidence>
<evidence type="ECO:0000305" key="5"/>
<dbReference type="EC" id="3.1.3.48"/>
<dbReference type="EMBL" id="M64062">
    <property type="protein sequence ID" value="AAA34923.1"/>
    <property type="molecule type" value="Genomic_DNA"/>
</dbReference>
<dbReference type="EMBL" id="Z74278">
    <property type="protein sequence ID" value="CAA98809.1"/>
    <property type="molecule type" value="Genomic_DNA"/>
</dbReference>
<dbReference type="EMBL" id="BK006938">
    <property type="protein sequence ID" value="DAA11636.1"/>
    <property type="molecule type" value="Genomic_DNA"/>
</dbReference>
<dbReference type="PIR" id="A39862">
    <property type="entry name" value="A39862"/>
</dbReference>
<dbReference type="RefSeq" id="NP_010051.1">
    <property type="nucleotide sequence ID" value="NM_001180290.1"/>
</dbReference>
<dbReference type="SMR" id="P25044"/>
<dbReference type="BioGRID" id="31881">
    <property type="interactions" value="125"/>
</dbReference>
<dbReference type="DIP" id="DIP-2765N"/>
<dbReference type="FunCoup" id="P25044">
    <property type="interactions" value="1063"/>
</dbReference>
<dbReference type="IntAct" id="P25044">
    <property type="interactions" value="14"/>
</dbReference>
<dbReference type="MINT" id="P25044"/>
<dbReference type="STRING" id="4932.YDL230W"/>
<dbReference type="BindingDB" id="P25044"/>
<dbReference type="ChEMBL" id="CHEMBL4452"/>
<dbReference type="DrugCentral" id="P25044"/>
<dbReference type="iPTMnet" id="P25044"/>
<dbReference type="PaxDb" id="4932-YDL230W"/>
<dbReference type="PeptideAtlas" id="P25044"/>
<dbReference type="EnsemblFungi" id="YDL230W_mRNA">
    <property type="protein sequence ID" value="YDL230W"/>
    <property type="gene ID" value="YDL230W"/>
</dbReference>
<dbReference type="GeneID" id="851368"/>
<dbReference type="KEGG" id="sce:YDL230W"/>
<dbReference type="AGR" id="SGD:S000002389"/>
<dbReference type="SGD" id="S000002389">
    <property type="gene designation" value="PTP1"/>
</dbReference>
<dbReference type="VEuPathDB" id="FungiDB:YDL230W"/>
<dbReference type="eggNOG" id="KOG0789">
    <property type="taxonomic scope" value="Eukaryota"/>
</dbReference>
<dbReference type="GeneTree" id="ENSGT00940000165633"/>
<dbReference type="HOGENOM" id="CLU_001645_9_12_1"/>
<dbReference type="InParanoid" id="P25044"/>
<dbReference type="OMA" id="WSIDKAP"/>
<dbReference type="OrthoDB" id="10253954at2759"/>
<dbReference type="BioCyc" id="YEAST:G3O-29609-MONOMER"/>
<dbReference type="Reactome" id="R-SCE-5675221">
    <property type="pathway name" value="Negative regulation of MAPK pathway"/>
</dbReference>
<dbReference type="Reactome" id="R-SCE-6798695">
    <property type="pathway name" value="Neutrophil degranulation"/>
</dbReference>
<dbReference type="BioGRID-ORCS" id="851368">
    <property type="hits" value="0 hits in 10 CRISPR screens"/>
</dbReference>
<dbReference type="PRO" id="PR:P25044"/>
<dbReference type="Proteomes" id="UP000002311">
    <property type="component" value="Chromosome IV"/>
</dbReference>
<dbReference type="RNAct" id="P25044">
    <property type="molecule type" value="protein"/>
</dbReference>
<dbReference type="GO" id="GO:0005737">
    <property type="term" value="C:cytoplasm"/>
    <property type="evidence" value="ECO:0007005"/>
    <property type="project" value="SGD"/>
</dbReference>
<dbReference type="GO" id="GO:0005739">
    <property type="term" value="C:mitochondrion"/>
    <property type="evidence" value="ECO:0007005"/>
    <property type="project" value="SGD"/>
</dbReference>
<dbReference type="GO" id="GO:0004725">
    <property type="term" value="F:protein tyrosine phosphatase activity"/>
    <property type="evidence" value="ECO:0000314"/>
    <property type="project" value="SGD"/>
</dbReference>
<dbReference type="GO" id="GO:0001403">
    <property type="term" value="P:invasive growth in response to glucose limitation"/>
    <property type="evidence" value="ECO:0000315"/>
    <property type="project" value="SGD"/>
</dbReference>
<dbReference type="GO" id="GO:0007124">
    <property type="term" value="P:pseudohyphal growth"/>
    <property type="evidence" value="ECO:0000315"/>
    <property type="project" value="SGD"/>
</dbReference>
<dbReference type="GO" id="GO:0007165">
    <property type="term" value="P:signal transduction"/>
    <property type="evidence" value="ECO:0000318"/>
    <property type="project" value="GO_Central"/>
</dbReference>
<dbReference type="CDD" id="cd18533">
    <property type="entry name" value="PTP_fungal"/>
    <property type="match status" value="1"/>
</dbReference>
<dbReference type="FunFam" id="3.90.190.10:FF:000115">
    <property type="entry name" value="Tyrosine-protein phosphatase 1"/>
    <property type="match status" value="1"/>
</dbReference>
<dbReference type="Gene3D" id="3.90.190.10">
    <property type="entry name" value="Protein tyrosine phosphatase superfamily"/>
    <property type="match status" value="1"/>
</dbReference>
<dbReference type="InterPro" id="IPR029021">
    <property type="entry name" value="Prot-tyrosine_phosphatase-like"/>
</dbReference>
<dbReference type="InterPro" id="IPR050348">
    <property type="entry name" value="Protein-Tyr_Phosphatase"/>
</dbReference>
<dbReference type="InterPro" id="IPR016277">
    <property type="entry name" value="Ptp1"/>
</dbReference>
<dbReference type="InterPro" id="IPR000242">
    <property type="entry name" value="PTP_cat"/>
</dbReference>
<dbReference type="InterPro" id="IPR016130">
    <property type="entry name" value="Tyr_Pase_AS"/>
</dbReference>
<dbReference type="InterPro" id="IPR003595">
    <property type="entry name" value="Tyr_Pase_cat"/>
</dbReference>
<dbReference type="InterPro" id="IPR000387">
    <property type="entry name" value="Tyr_Pase_dom"/>
</dbReference>
<dbReference type="PANTHER" id="PTHR19134">
    <property type="entry name" value="RECEPTOR-TYPE TYROSINE-PROTEIN PHOSPHATASE"/>
    <property type="match status" value="1"/>
</dbReference>
<dbReference type="PANTHER" id="PTHR19134:SF449">
    <property type="entry name" value="TYROSINE-PROTEIN PHOSPHATASE 1"/>
    <property type="match status" value="1"/>
</dbReference>
<dbReference type="Pfam" id="PF00102">
    <property type="entry name" value="Y_phosphatase"/>
    <property type="match status" value="1"/>
</dbReference>
<dbReference type="PIRSF" id="PIRSF000938">
    <property type="entry name" value="PTPN1_yeast"/>
    <property type="match status" value="1"/>
</dbReference>
<dbReference type="PRINTS" id="PR00700">
    <property type="entry name" value="PRTYPHPHTASE"/>
</dbReference>
<dbReference type="SMART" id="SM00194">
    <property type="entry name" value="PTPc"/>
    <property type="match status" value="1"/>
</dbReference>
<dbReference type="SMART" id="SM00404">
    <property type="entry name" value="PTPc_motif"/>
    <property type="match status" value="1"/>
</dbReference>
<dbReference type="SUPFAM" id="SSF52799">
    <property type="entry name" value="(Phosphotyrosine protein) phosphatases II"/>
    <property type="match status" value="1"/>
</dbReference>
<dbReference type="PROSITE" id="PS00383">
    <property type="entry name" value="TYR_PHOSPHATASE_1"/>
    <property type="match status" value="1"/>
</dbReference>
<dbReference type="PROSITE" id="PS50056">
    <property type="entry name" value="TYR_PHOSPHATASE_2"/>
    <property type="match status" value="1"/>
</dbReference>
<dbReference type="PROSITE" id="PS50055">
    <property type="entry name" value="TYR_PHOSPHATASE_PTP"/>
    <property type="match status" value="1"/>
</dbReference>
<reference key="1">
    <citation type="journal article" date="1991" name="J. Biol. Chem.">
        <title>Cloning and expression of a yeast protein tyrosine phosphatase.</title>
        <authorList>
            <person name="Guan K."/>
            <person name="Deschenes R.J."/>
            <person name="Qiu H."/>
            <person name="Dixon J.E."/>
        </authorList>
    </citation>
    <scope>NUCLEOTIDE SEQUENCE [GENOMIC DNA]</scope>
</reference>
<reference key="2">
    <citation type="journal article" date="1997" name="Nature">
        <title>The nucleotide sequence of Saccharomyces cerevisiae chromosome IV.</title>
        <authorList>
            <person name="Jacq C."/>
            <person name="Alt-Moerbe J."/>
            <person name="Andre B."/>
            <person name="Arnold W."/>
            <person name="Bahr A."/>
            <person name="Ballesta J.P.G."/>
            <person name="Bargues M."/>
            <person name="Baron L."/>
            <person name="Becker A."/>
            <person name="Biteau N."/>
            <person name="Bloecker H."/>
            <person name="Blugeon C."/>
            <person name="Boskovic J."/>
            <person name="Brandt P."/>
            <person name="Brueckner M."/>
            <person name="Buitrago M.J."/>
            <person name="Coster F."/>
            <person name="Delaveau T."/>
            <person name="del Rey F."/>
            <person name="Dujon B."/>
            <person name="Eide L.G."/>
            <person name="Garcia-Cantalejo J.M."/>
            <person name="Goffeau A."/>
            <person name="Gomez-Peris A."/>
            <person name="Granotier C."/>
            <person name="Hanemann V."/>
            <person name="Hankeln T."/>
            <person name="Hoheisel J.D."/>
            <person name="Jaeger W."/>
            <person name="Jimenez A."/>
            <person name="Jonniaux J.-L."/>
            <person name="Kraemer C."/>
            <person name="Kuester H."/>
            <person name="Laamanen P."/>
            <person name="Legros Y."/>
            <person name="Louis E.J."/>
            <person name="Moeller-Rieker S."/>
            <person name="Monnet A."/>
            <person name="Moro M."/>
            <person name="Mueller-Auer S."/>
            <person name="Nussbaumer B."/>
            <person name="Paricio N."/>
            <person name="Paulin L."/>
            <person name="Perea J."/>
            <person name="Perez-Alonso M."/>
            <person name="Perez-Ortin J.E."/>
            <person name="Pohl T.M."/>
            <person name="Prydz H."/>
            <person name="Purnelle B."/>
            <person name="Rasmussen S.W."/>
            <person name="Remacha M.A."/>
            <person name="Revuelta J.L."/>
            <person name="Rieger M."/>
            <person name="Salom D."/>
            <person name="Saluz H.P."/>
            <person name="Saiz J.E."/>
            <person name="Saren A.-M."/>
            <person name="Schaefer M."/>
            <person name="Scharfe M."/>
            <person name="Schmidt E.R."/>
            <person name="Schneider C."/>
            <person name="Scholler P."/>
            <person name="Schwarz S."/>
            <person name="Soler-Mira A."/>
            <person name="Urrestarazu L.A."/>
            <person name="Verhasselt P."/>
            <person name="Vissers S."/>
            <person name="Voet M."/>
            <person name="Volckaert G."/>
            <person name="Wagner G."/>
            <person name="Wambutt R."/>
            <person name="Wedler E."/>
            <person name="Wedler H."/>
            <person name="Woelfl S."/>
            <person name="Harris D.E."/>
            <person name="Bowman S."/>
            <person name="Brown D."/>
            <person name="Churcher C.M."/>
            <person name="Connor R."/>
            <person name="Dedman K."/>
            <person name="Gentles S."/>
            <person name="Hamlin N."/>
            <person name="Hunt S."/>
            <person name="Jones L."/>
            <person name="McDonald S."/>
            <person name="Murphy L.D."/>
            <person name="Niblett D."/>
            <person name="Odell C."/>
            <person name="Oliver K."/>
            <person name="Rajandream M.A."/>
            <person name="Richards C."/>
            <person name="Shore L."/>
            <person name="Walsh S.V."/>
            <person name="Barrell B.G."/>
            <person name="Dietrich F.S."/>
            <person name="Mulligan J.T."/>
            <person name="Allen E."/>
            <person name="Araujo R."/>
            <person name="Aviles E."/>
            <person name="Berno A."/>
            <person name="Carpenter J."/>
            <person name="Chen E."/>
            <person name="Cherry J.M."/>
            <person name="Chung E."/>
            <person name="Duncan M."/>
            <person name="Hunicke-Smith S."/>
            <person name="Hyman R.W."/>
            <person name="Komp C."/>
            <person name="Lashkari D."/>
            <person name="Lew H."/>
            <person name="Lin D."/>
            <person name="Mosedale D."/>
            <person name="Nakahara K."/>
            <person name="Namath A."/>
            <person name="Oefner P."/>
            <person name="Oh C."/>
            <person name="Petel F.X."/>
            <person name="Roberts D."/>
            <person name="Schramm S."/>
            <person name="Schroeder M."/>
            <person name="Shogren T."/>
            <person name="Shroff N."/>
            <person name="Winant A."/>
            <person name="Yelton M.A."/>
            <person name="Botstein D."/>
            <person name="Davis R.W."/>
            <person name="Johnston M."/>
            <person name="Andrews S."/>
            <person name="Brinkman R."/>
            <person name="Cooper J."/>
            <person name="Ding H."/>
            <person name="Du Z."/>
            <person name="Favello A."/>
            <person name="Fulton L."/>
            <person name="Gattung S."/>
            <person name="Greco T."/>
            <person name="Hallsworth K."/>
            <person name="Hawkins J."/>
            <person name="Hillier L.W."/>
            <person name="Jier M."/>
            <person name="Johnson D."/>
            <person name="Johnston L."/>
            <person name="Kirsten J."/>
            <person name="Kucaba T."/>
            <person name="Langston Y."/>
            <person name="Latreille P."/>
            <person name="Le T."/>
            <person name="Mardis E."/>
            <person name="Menezes S."/>
            <person name="Miller N."/>
            <person name="Nhan M."/>
            <person name="Pauley A."/>
            <person name="Peluso D."/>
            <person name="Rifkin L."/>
            <person name="Riles L."/>
            <person name="Taich A."/>
            <person name="Trevaskis E."/>
            <person name="Vignati D."/>
            <person name="Wilcox L."/>
            <person name="Wohldman P."/>
            <person name="Vaudin M."/>
            <person name="Wilson R."/>
            <person name="Waterston R."/>
            <person name="Albermann K."/>
            <person name="Hani J."/>
            <person name="Heumann K."/>
            <person name="Kleine K."/>
            <person name="Mewes H.-W."/>
            <person name="Zollner A."/>
            <person name="Zaccaria P."/>
        </authorList>
    </citation>
    <scope>NUCLEOTIDE SEQUENCE [LARGE SCALE GENOMIC DNA]</scope>
    <source>
        <strain>ATCC 204508 / S288c</strain>
    </source>
</reference>
<reference key="3">
    <citation type="journal article" date="2014" name="G3 (Bethesda)">
        <title>The reference genome sequence of Saccharomyces cerevisiae: Then and now.</title>
        <authorList>
            <person name="Engel S.R."/>
            <person name="Dietrich F.S."/>
            <person name="Fisk D.G."/>
            <person name="Binkley G."/>
            <person name="Balakrishnan R."/>
            <person name="Costanzo M.C."/>
            <person name="Dwight S.S."/>
            <person name="Hitz B.C."/>
            <person name="Karra K."/>
            <person name="Nash R.S."/>
            <person name="Weng S."/>
            <person name="Wong E.D."/>
            <person name="Lloyd P."/>
            <person name="Skrzypek M.S."/>
            <person name="Miyasato S.R."/>
            <person name="Simison M."/>
            <person name="Cherry J.M."/>
        </authorList>
    </citation>
    <scope>GENOME REANNOTATION</scope>
    <source>
        <strain>ATCC 204508 / S288c</strain>
    </source>
</reference>
<reference key="4">
    <citation type="journal article" date="1999" name="J. Biol. Chem.">
        <title>The CLK family kinases, CLK1 and CLK2, phosphorylate and activate the tyrosine phosphatase, PTP-1B.</title>
        <authorList>
            <person name="Moeslein F.M."/>
            <person name="Myers M.P."/>
            <person name="Landreth G.E."/>
        </authorList>
    </citation>
    <scope>PHOSPHORYLATION AT SER-83</scope>
</reference>
<reference key="5">
    <citation type="journal article" date="2003" name="Nature">
        <title>Global analysis of protein expression in yeast.</title>
        <authorList>
            <person name="Ghaemmaghami S."/>
            <person name="Huh W.-K."/>
            <person name="Bower K."/>
            <person name="Howson R.W."/>
            <person name="Belle A."/>
            <person name="Dephoure N."/>
            <person name="O'Shea E.K."/>
            <person name="Weissman J.S."/>
        </authorList>
    </citation>
    <scope>LEVEL OF PROTEIN EXPRESSION [LARGE SCALE ANALYSIS]</scope>
</reference>
<sequence>MAAAPWYIRQRDTDLLGKFKFIQNQEDGRLREATNGTVNSRWSLGVSIEPRNDARNRYVNIMPYERNRVHLKTLSGNDYINASYVKVNVPGQSIEPGYYIATQGPTRKTWDQFWQMCYHNCPLDNIVIVMVTPLVEYNREKCYQYWPRGGVDDTVRIASKWESPGGANDMTQFPSDLKIEFVNVHKVKDYYTVTDIKLTPTDPLVGPVKTVHHFYFDLWKDMNKPEEVVPIMELCAHSHSLNSRGNPIIVHCSAGVGRTGTFIALDHLMHDTLDFKNITERSRHSDRATEEYTRDLIEQIVLQLRSQRMKMVQTKDQFLFIYHAAKYLNSLSVNQ</sequence>
<comment type="function">
    <text>Is not required for vegetative growth.</text>
</comment>
<comment type="catalytic activity">
    <reaction evidence="2">
        <text>O-phospho-L-tyrosyl-[protein] + H2O = L-tyrosyl-[protein] + phosphate</text>
        <dbReference type="Rhea" id="RHEA:10684"/>
        <dbReference type="Rhea" id="RHEA-COMP:10136"/>
        <dbReference type="Rhea" id="RHEA-COMP:20101"/>
        <dbReference type="ChEBI" id="CHEBI:15377"/>
        <dbReference type="ChEBI" id="CHEBI:43474"/>
        <dbReference type="ChEBI" id="CHEBI:46858"/>
        <dbReference type="ChEBI" id="CHEBI:61978"/>
        <dbReference type="EC" id="3.1.3.48"/>
    </reaction>
</comment>
<comment type="interaction">
    <interactant intactId="EBI-14183">
        <id>P25044</id>
    </interactant>
    <interactant intactId="EBI-16219">
        <id>P39940</id>
        <label>RSP5</label>
    </interactant>
    <organismsDiffer>false</organismsDiffer>
    <experiments>2</experiments>
</comment>
<comment type="subcellular location">
    <subcellularLocation>
        <location>Cytoplasm</location>
    </subcellularLocation>
</comment>
<comment type="PTM">
    <text evidence="3">Activated by phosphorylation at Ser-83.</text>
</comment>
<comment type="miscellaneous">
    <text evidence="4">Present with 2690 molecules/cell in log phase SD medium.</text>
</comment>
<comment type="similarity">
    <text evidence="5">Belongs to the protein-tyrosine phosphatase family. Non-receptor class subfamily.</text>
</comment>
<accession>P25044</accession>
<accession>D6VRC6</accession>
<organism>
    <name type="scientific">Saccharomyces cerevisiae (strain ATCC 204508 / S288c)</name>
    <name type="common">Baker's yeast</name>
    <dbReference type="NCBI Taxonomy" id="559292"/>
    <lineage>
        <taxon>Eukaryota</taxon>
        <taxon>Fungi</taxon>
        <taxon>Dikarya</taxon>
        <taxon>Ascomycota</taxon>
        <taxon>Saccharomycotina</taxon>
        <taxon>Saccharomycetes</taxon>
        <taxon>Saccharomycetales</taxon>
        <taxon>Saccharomycetaceae</taxon>
        <taxon>Saccharomyces</taxon>
    </lineage>
</organism>
<protein>
    <recommendedName>
        <fullName>Tyrosine-protein phosphatase 1</fullName>
        <ecNumber>3.1.3.48</ecNumber>
    </recommendedName>
    <alternativeName>
        <fullName>Protein-tyrosine phosphatase 1</fullName>
        <shortName>PTPase 1</shortName>
    </alternativeName>
</protein>
<feature type="chain" id="PRO_0000094855" description="Tyrosine-protein phosphatase 1">
    <location>
        <begin position="1"/>
        <end position="335"/>
    </location>
</feature>
<feature type="domain" description="Tyrosine-protein phosphatase" evidence="1">
    <location>
        <begin position="15"/>
        <end position="328"/>
    </location>
</feature>
<feature type="active site" description="Phosphocysteine intermediate" evidence="1 2">
    <location>
        <position position="252"/>
    </location>
</feature>
<feature type="modified residue" description="Phosphoserine; by CLK1" evidence="3">
    <location>
        <position position="83"/>
    </location>
</feature>
<proteinExistence type="evidence at protein level"/>
<keyword id="KW-0963">Cytoplasm</keyword>
<keyword id="KW-0378">Hydrolase</keyword>
<keyword id="KW-0597">Phosphoprotein</keyword>
<keyword id="KW-0904">Protein phosphatase</keyword>
<keyword id="KW-1185">Reference proteome</keyword>